<dbReference type="EC" id="2.7.1.39" evidence="1"/>
<dbReference type="EMBL" id="BA000031">
    <property type="protein sequence ID" value="BAC58758.1"/>
    <property type="molecule type" value="Genomic_DNA"/>
</dbReference>
<dbReference type="RefSeq" id="NP_796874.1">
    <property type="nucleotide sequence ID" value="NC_004603.1"/>
</dbReference>
<dbReference type="RefSeq" id="WP_005479586.1">
    <property type="nucleotide sequence ID" value="NC_004603.1"/>
</dbReference>
<dbReference type="SMR" id="Q87SC9"/>
<dbReference type="GeneID" id="1187963"/>
<dbReference type="KEGG" id="vpa:VP0495"/>
<dbReference type="PATRIC" id="fig|223926.6.peg.471"/>
<dbReference type="eggNOG" id="COG0083">
    <property type="taxonomic scope" value="Bacteria"/>
</dbReference>
<dbReference type="HOGENOM" id="CLU_041243_1_1_6"/>
<dbReference type="UniPathway" id="UPA00050">
    <property type="reaction ID" value="UER00064"/>
</dbReference>
<dbReference type="Proteomes" id="UP000002493">
    <property type="component" value="Chromosome 1"/>
</dbReference>
<dbReference type="GO" id="GO:0005737">
    <property type="term" value="C:cytoplasm"/>
    <property type="evidence" value="ECO:0007669"/>
    <property type="project" value="UniProtKB-SubCell"/>
</dbReference>
<dbReference type="GO" id="GO:0005524">
    <property type="term" value="F:ATP binding"/>
    <property type="evidence" value="ECO:0007669"/>
    <property type="project" value="UniProtKB-UniRule"/>
</dbReference>
<dbReference type="GO" id="GO:0004413">
    <property type="term" value="F:homoserine kinase activity"/>
    <property type="evidence" value="ECO:0007669"/>
    <property type="project" value="UniProtKB-UniRule"/>
</dbReference>
<dbReference type="GO" id="GO:0009088">
    <property type="term" value="P:threonine biosynthetic process"/>
    <property type="evidence" value="ECO:0007669"/>
    <property type="project" value="UniProtKB-UniRule"/>
</dbReference>
<dbReference type="Gene3D" id="3.30.230.10">
    <property type="match status" value="1"/>
</dbReference>
<dbReference type="Gene3D" id="3.30.70.890">
    <property type="entry name" value="GHMP kinase, C-terminal domain"/>
    <property type="match status" value="1"/>
</dbReference>
<dbReference type="HAMAP" id="MF_00384">
    <property type="entry name" value="Homoser_kinase"/>
    <property type="match status" value="1"/>
</dbReference>
<dbReference type="InterPro" id="IPR013750">
    <property type="entry name" value="GHMP_kinase_C_dom"/>
</dbReference>
<dbReference type="InterPro" id="IPR036554">
    <property type="entry name" value="GHMP_kinase_C_sf"/>
</dbReference>
<dbReference type="InterPro" id="IPR006204">
    <property type="entry name" value="GHMP_kinase_N_dom"/>
</dbReference>
<dbReference type="InterPro" id="IPR006203">
    <property type="entry name" value="GHMP_knse_ATP-bd_CS"/>
</dbReference>
<dbReference type="InterPro" id="IPR000870">
    <property type="entry name" value="Homoserine_kinase"/>
</dbReference>
<dbReference type="InterPro" id="IPR020568">
    <property type="entry name" value="Ribosomal_Su5_D2-typ_SF"/>
</dbReference>
<dbReference type="InterPro" id="IPR014721">
    <property type="entry name" value="Ribsml_uS5_D2-typ_fold_subgr"/>
</dbReference>
<dbReference type="NCBIfam" id="NF002288">
    <property type="entry name" value="PRK01212.1-4"/>
    <property type="match status" value="1"/>
</dbReference>
<dbReference type="NCBIfam" id="TIGR00191">
    <property type="entry name" value="thrB"/>
    <property type="match status" value="1"/>
</dbReference>
<dbReference type="PANTHER" id="PTHR20861:SF1">
    <property type="entry name" value="HOMOSERINE KINASE"/>
    <property type="match status" value="1"/>
</dbReference>
<dbReference type="PANTHER" id="PTHR20861">
    <property type="entry name" value="HOMOSERINE/4-DIPHOSPHOCYTIDYL-2-C-METHYL-D-ERYTHRITOL KINASE"/>
    <property type="match status" value="1"/>
</dbReference>
<dbReference type="Pfam" id="PF08544">
    <property type="entry name" value="GHMP_kinases_C"/>
    <property type="match status" value="1"/>
</dbReference>
<dbReference type="Pfam" id="PF00288">
    <property type="entry name" value="GHMP_kinases_N"/>
    <property type="match status" value="1"/>
</dbReference>
<dbReference type="PIRSF" id="PIRSF000676">
    <property type="entry name" value="Homoser_kin"/>
    <property type="match status" value="1"/>
</dbReference>
<dbReference type="PRINTS" id="PR00958">
    <property type="entry name" value="HOMSERKINASE"/>
</dbReference>
<dbReference type="SUPFAM" id="SSF55060">
    <property type="entry name" value="GHMP Kinase, C-terminal domain"/>
    <property type="match status" value="1"/>
</dbReference>
<dbReference type="SUPFAM" id="SSF54211">
    <property type="entry name" value="Ribosomal protein S5 domain 2-like"/>
    <property type="match status" value="1"/>
</dbReference>
<dbReference type="PROSITE" id="PS00627">
    <property type="entry name" value="GHMP_KINASES_ATP"/>
    <property type="match status" value="1"/>
</dbReference>
<gene>
    <name evidence="1" type="primary">thrB</name>
    <name type="ordered locus">VP0495</name>
</gene>
<protein>
    <recommendedName>
        <fullName evidence="1">Homoserine kinase</fullName>
        <shortName evidence="1">HK</shortName>
        <shortName evidence="1">HSK</shortName>
        <ecNumber evidence="1">2.7.1.39</ecNumber>
    </recommendedName>
</protein>
<name>KHSE_VIBPA</name>
<organism>
    <name type="scientific">Vibrio parahaemolyticus serotype O3:K6 (strain RIMD 2210633)</name>
    <dbReference type="NCBI Taxonomy" id="223926"/>
    <lineage>
        <taxon>Bacteria</taxon>
        <taxon>Pseudomonadati</taxon>
        <taxon>Pseudomonadota</taxon>
        <taxon>Gammaproteobacteria</taxon>
        <taxon>Vibrionales</taxon>
        <taxon>Vibrionaceae</taxon>
        <taxon>Vibrio</taxon>
    </lineage>
</organism>
<proteinExistence type="inferred from homology"/>
<accession>Q87SC9</accession>
<sequence>MGVVVYAPASIGNVSVGFDVLGAAVSPVDGTLLGDRVQVKAGTEPFSLNTAGHFVSKLPTDPKENIVYDCWVVFARELDKKGIELKPLEMTLEKNMPIGSGLGSSACSIVAALDALNRFHDQPLNETELLALMGEMEGKISGGIHYDNVAPCYLGGVQLMLEELGIISQEVPCFDEWYWVMAYPGIKVSTAEAREILPSQYRRQDIIAHGRHLAGFIHACHSGQPELAAKMIKDVIAEPYREKLLPGFANARQYAASAGALATGISGSGPTLFSICKQKDVAERVARWLEQNYVQNEEGFVHVCRLDKQGSKVTGSEL</sequence>
<reference key="1">
    <citation type="journal article" date="2003" name="Lancet">
        <title>Genome sequence of Vibrio parahaemolyticus: a pathogenic mechanism distinct from that of V. cholerae.</title>
        <authorList>
            <person name="Makino K."/>
            <person name="Oshima K."/>
            <person name="Kurokawa K."/>
            <person name="Yokoyama K."/>
            <person name="Uda T."/>
            <person name="Tagomori K."/>
            <person name="Iijima Y."/>
            <person name="Najima M."/>
            <person name="Nakano M."/>
            <person name="Yamashita A."/>
            <person name="Kubota Y."/>
            <person name="Kimura S."/>
            <person name="Yasunaga T."/>
            <person name="Honda T."/>
            <person name="Shinagawa H."/>
            <person name="Hattori M."/>
            <person name="Iida T."/>
        </authorList>
    </citation>
    <scope>NUCLEOTIDE SEQUENCE [LARGE SCALE GENOMIC DNA]</scope>
    <source>
        <strain>RIMD 2210633</strain>
    </source>
</reference>
<keyword id="KW-0028">Amino-acid biosynthesis</keyword>
<keyword id="KW-0067">ATP-binding</keyword>
<keyword id="KW-0963">Cytoplasm</keyword>
<keyword id="KW-0418">Kinase</keyword>
<keyword id="KW-0547">Nucleotide-binding</keyword>
<keyword id="KW-0791">Threonine biosynthesis</keyword>
<keyword id="KW-0808">Transferase</keyword>
<comment type="function">
    <text evidence="1">Catalyzes the ATP-dependent phosphorylation of L-homoserine to L-homoserine phosphate.</text>
</comment>
<comment type="catalytic activity">
    <reaction evidence="1">
        <text>L-homoserine + ATP = O-phospho-L-homoserine + ADP + H(+)</text>
        <dbReference type="Rhea" id="RHEA:13985"/>
        <dbReference type="ChEBI" id="CHEBI:15378"/>
        <dbReference type="ChEBI" id="CHEBI:30616"/>
        <dbReference type="ChEBI" id="CHEBI:57476"/>
        <dbReference type="ChEBI" id="CHEBI:57590"/>
        <dbReference type="ChEBI" id="CHEBI:456216"/>
        <dbReference type="EC" id="2.7.1.39"/>
    </reaction>
</comment>
<comment type="pathway">
    <text evidence="1">Amino-acid biosynthesis; L-threonine biosynthesis; L-threonine from L-aspartate: step 4/5.</text>
</comment>
<comment type="subcellular location">
    <subcellularLocation>
        <location evidence="1">Cytoplasm</location>
    </subcellularLocation>
</comment>
<comment type="similarity">
    <text evidence="1">Belongs to the GHMP kinase family. Homoserine kinase subfamily.</text>
</comment>
<feature type="chain" id="PRO_0000156629" description="Homoserine kinase">
    <location>
        <begin position="1"/>
        <end position="318"/>
    </location>
</feature>
<feature type="binding site" evidence="1">
    <location>
        <begin position="97"/>
        <end position="107"/>
    </location>
    <ligand>
        <name>ATP</name>
        <dbReference type="ChEBI" id="CHEBI:30616"/>
    </ligand>
</feature>
<evidence type="ECO:0000255" key="1">
    <source>
        <dbReference type="HAMAP-Rule" id="MF_00384"/>
    </source>
</evidence>